<feature type="chain" id="PRO_0000458393" description="FAD-dependent monooxygenase phomE'">
    <location>
        <begin position="1"/>
        <end position="396"/>
    </location>
</feature>
<feature type="active site" evidence="3">
    <location>
        <position position="158"/>
    </location>
</feature>
<feature type="active site" evidence="3">
    <location>
        <position position="196"/>
    </location>
</feature>
<feature type="binding site" evidence="3">
    <location>
        <position position="3"/>
    </location>
    <ligand>
        <name>FAD</name>
        <dbReference type="ChEBI" id="CHEBI:57692"/>
    </ligand>
</feature>
<feature type="binding site" evidence="3">
    <location>
        <position position="277"/>
    </location>
    <ligand>
        <name>FAD</name>
        <dbReference type="ChEBI" id="CHEBI:57692"/>
    </ligand>
</feature>
<feature type="binding site" evidence="3">
    <location>
        <position position="290"/>
    </location>
    <ligand>
        <name>FAD</name>
        <dbReference type="ChEBI" id="CHEBI:57692"/>
    </ligand>
</feature>
<keyword id="KW-0274">FAD</keyword>
<keyword id="KW-0285">Flavoprotein</keyword>
<keyword id="KW-0503">Monooxygenase</keyword>
<keyword id="KW-0560">Oxidoreductase</keyword>
<keyword id="KW-0843">Virulence</keyword>
<comment type="function">
    <text evidence="4 9">FAD-dependent monooxygenase; part of the gene cluster that mediates the biosynthesis of the phomopsins, a group of hexapeptide mycotoxins which infects lupins and causes lupinosis disease in livestock (PubMed:34608734). The role of phomE' within the phomopsins biosynthesis pathway has still to be determined (Probable). The pathway starts with the processing of the precursor phomA by several endopeptidases including kexin proteases as well as the cluster-specific S41 family peptidase phomP1 and the oligopeptidase phomG to produce 10 identical copies of the hexapeptide Tyr-Val-Ile-Pro-Ile-Asp. After being excised from the precursor peptide, the core peptides are cyclized and modified post-translationally by enzymes encoded within the gene cluster. The timing and order of proteolysis of the phomA precursor and PTMs are still unknown. Two tyrosinase-like enzymes, phomQ1 and phomQ2, catalyze the chlorination and hydroxylation of Tyr, respectively. PhomYb, is proposed to be involved in the construction of the macrocyclic structure. The other 4 ustYa family proteins may be involved in PTMs that generate the unique structure of phomopsin A. PhomYa is required for the hydroxylation of C-beta of Tyr. PhomYc, phomYd, and phomYe are responsible for the biosynthesis of 2,3-dehydroisoleucine (dIle), 2,3-dehydroaspartic acid (dAsp), and 3,4-dehydroproline (dPro), respectively. While dIle formation by phomYc is indispensable for the installation of dAsp by phomYd, the order of the other PTMs have not been elucidated yet. Most of the biosynthetic enzymes likely have broad substrate specificity, and thus, there might be a metabolic grid from a precursor to phomopsin A. The enzyme(s) responsible for the biosynthesis of 3,4-dehydrovaline (dVal) have also not been identified yet. Finally, phomM acts as an S-adenosylmethionine-dependent alpha-N-methyltransferase that catalyzes two successive N-methylation reactions, converting N-desmethyl-phomopsin A to phomopsin A and phomopsin A further to an N,N-dimethylated congener called phomopsin E (Probable).</text>
</comment>
<comment type="cofactor">
    <cofactor evidence="2">
        <name>FAD</name>
        <dbReference type="ChEBI" id="CHEBI:57692"/>
    </cofactor>
</comment>
<comment type="subunit">
    <text evidence="1">Monomer.</text>
</comment>
<comment type="similarity">
    <text evidence="7">Belongs to the paxM FAD-dependent monooxygenase family.</text>
</comment>
<dbReference type="EC" id="1.-.-.-" evidence="8"/>
<dbReference type="EMBL" id="KU645829">
    <property type="protein sequence ID" value="AMR44277.1"/>
    <property type="molecule type" value="Genomic_DNA"/>
</dbReference>
<dbReference type="SMR" id="A0A142I725"/>
<dbReference type="GO" id="GO:0071949">
    <property type="term" value="F:FAD binding"/>
    <property type="evidence" value="ECO:0007669"/>
    <property type="project" value="InterPro"/>
</dbReference>
<dbReference type="GO" id="GO:0004497">
    <property type="term" value="F:monooxygenase activity"/>
    <property type="evidence" value="ECO:0007669"/>
    <property type="project" value="UniProtKB-KW"/>
</dbReference>
<dbReference type="Gene3D" id="3.50.50.60">
    <property type="entry name" value="FAD/NAD(P)-binding domain"/>
    <property type="match status" value="1"/>
</dbReference>
<dbReference type="InterPro" id="IPR002938">
    <property type="entry name" value="FAD-bd"/>
</dbReference>
<dbReference type="InterPro" id="IPR050493">
    <property type="entry name" value="FAD-dep_Monooxygenase_BioMet"/>
</dbReference>
<dbReference type="InterPro" id="IPR036188">
    <property type="entry name" value="FAD/NAD-bd_sf"/>
</dbReference>
<dbReference type="PANTHER" id="PTHR13789:SF215">
    <property type="entry name" value="FAD-BINDING DOMAIN-CONTAINING PROTEIN-RELATED"/>
    <property type="match status" value="1"/>
</dbReference>
<dbReference type="PANTHER" id="PTHR13789">
    <property type="entry name" value="MONOOXYGENASE"/>
    <property type="match status" value="1"/>
</dbReference>
<dbReference type="Pfam" id="PF01494">
    <property type="entry name" value="FAD_binding_3"/>
    <property type="match status" value="1"/>
</dbReference>
<dbReference type="PRINTS" id="PR00420">
    <property type="entry name" value="RNGMNOXGNASE"/>
</dbReference>
<dbReference type="SUPFAM" id="SSF51905">
    <property type="entry name" value="FAD/NAD(P)-binding domain"/>
    <property type="match status" value="1"/>
</dbReference>
<evidence type="ECO:0000250" key="1">
    <source>
        <dbReference type="UniProtKB" id="A0A146I0C4"/>
    </source>
</evidence>
<evidence type="ECO:0000250" key="2">
    <source>
        <dbReference type="UniProtKB" id="A6T923"/>
    </source>
</evidence>
<evidence type="ECO:0000250" key="3">
    <source>
        <dbReference type="UniProtKB" id="B8M9J8"/>
    </source>
</evidence>
<evidence type="ECO:0000269" key="4">
    <source>
    </source>
</evidence>
<evidence type="ECO:0000303" key="5">
    <source>
    </source>
</evidence>
<evidence type="ECO:0000303" key="6">
    <source>
    </source>
</evidence>
<evidence type="ECO:0000305" key="7"/>
<evidence type="ECO:0000305" key="8">
    <source>
    </source>
</evidence>
<evidence type="ECO:0000305" key="9">
    <source>
    </source>
</evidence>
<sequence length="396" mass="43689">MIEQSSLLNEVGAAITIKPNASRVLLSWDIVPEQSGMVALRKGSIIDGTNMQVLIPDYYKDSESKWGLPMYAVHRVDLHTQLRLLATQKEGPGQPCDVQVRSKVVSYDAEGAKVTTENGEVLRADLIIAADGVHSTAVKQVLGDEVVQAGDTGWACMRWLVPSDDFLSDPQTAHMIQDSTTRYFTAAGGAAALVWYPCRNNEVQNFLYLSREFDISHVGEDFRARVEPSVPLEYAKKHFATALQTVVKKANQVKFWKLVARGPIPKWHKDRLVLIGDAAHPMLTFQGQGGGQAIEDGAALGILLDNVHDRGEIEERLQLFEQIRRNRGSALQILSNTNPPVPQSVRDAAAEYLPGHRLSSTDDVNEYVFSFDVLAESKAALAILQSKERITKSGFL</sequence>
<name>PHOE2_DIALO</name>
<organism>
    <name type="scientific">Diaporthe leptostromiformis</name>
    <name type="common">Lupinosis disease fungus</name>
    <name type="synonym">Phomopsis leptostromiformis</name>
    <dbReference type="NCBI Taxonomy" id="291059"/>
    <lineage>
        <taxon>Eukaryota</taxon>
        <taxon>Fungi</taxon>
        <taxon>Dikarya</taxon>
        <taxon>Ascomycota</taxon>
        <taxon>Pezizomycotina</taxon>
        <taxon>Sordariomycetes</taxon>
        <taxon>Sordariomycetidae</taxon>
        <taxon>Diaporthales</taxon>
        <taxon>Diaporthaceae</taxon>
        <taxon>Diaporthe</taxon>
    </lineage>
</organism>
<accession>A0A142I725</accession>
<proteinExistence type="inferred from homology"/>
<gene>
    <name evidence="6" type="primary">phomE'</name>
    <name evidence="5" type="synonym">PhomE</name>
</gene>
<protein>
    <recommendedName>
        <fullName evidence="6">FAD-dependent monooxygenase phomE'</fullName>
        <ecNumber evidence="8">1.-.-.-</ecNumber>
    </recommendedName>
    <alternativeName>
        <fullName evidence="6">Phomopsin biosynthesis cluster protein E'</fullName>
    </alternativeName>
</protein>
<reference key="1">
    <citation type="journal article" date="2016" name="Proc. Natl. Acad. Sci. U.S.A.">
        <title>Biosynthetic investigation of phomopsins reveals a widespread pathway for ribosomal natural products in Ascomycetes.</title>
        <authorList>
            <person name="Ding W."/>
            <person name="Liu W.Q."/>
            <person name="Jia Y."/>
            <person name="Li Y."/>
            <person name="van der Donk W.A."/>
            <person name="Zhang Q."/>
        </authorList>
    </citation>
    <scope>NUCLEOTIDE SEQUENCE [GENOMIC DNA]</scope>
    <scope>FUNCTION</scope>
    <source>
        <strain>ATCC 26115 / IMI 115107 / C 1557</strain>
    </source>
</reference>
<reference key="2">
    <citation type="journal article" date="2021" name="Angew. Chem. Int. Ed.">
        <title>Biosynthetic studies of phomopsins unveil posttranslational installation of dehydroamino acids by ustYa family proteins.</title>
        <authorList>
            <person name="Sogahata K."/>
            <person name="Ozaki T."/>
            <person name="Igarashi Y."/>
            <person name="Naganuma Y."/>
            <person name="Liu C."/>
            <person name="Minami A."/>
            <person name="Oikawa H."/>
        </authorList>
    </citation>
    <scope>NOMENCLATURE</scope>
    <source>
        <strain>ATCC 26115 / IMI 115107 / C 1557</strain>
    </source>
</reference>